<reference key="1">
    <citation type="journal article" date="2007" name="PLoS ONE">
        <title>A glimpse of streptococcal toxic shock syndrome from comparative genomics of S. suis 2 Chinese isolates.</title>
        <authorList>
            <person name="Chen C."/>
            <person name="Tang J."/>
            <person name="Dong W."/>
            <person name="Wang C."/>
            <person name="Feng Y."/>
            <person name="Wang J."/>
            <person name="Zheng F."/>
            <person name="Pan X."/>
            <person name="Liu D."/>
            <person name="Li M."/>
            <person name="Song Y."/>
            <person name="Zhu X."/>
            <person name="Sun H."/>
            <person name="Feng T."/>
            <person name="Guo Z."/>
            <person name="Ju A."/>
            <person name="Ge J."/>
            <person name="Dong Y."/>
            <person name="Sun W."/>
            <person name="Jiang Y."/>
            <person name="Wang J."/>
            <person name="Yan J."/>
            <person name="Yang H."/>
            <person name="Wang X."/>
            <person name="Gao G.F."/>
            <person name="Yang R."/>
            <person name="Wang J."/>
            <person name="Yu J."/>
        </authorList>
    </citation>
    <scope>NUCLEOTIDE SEQUENCE [LARGE SCALE GENOMIC DNA]</scope>
    <source>
        <strain>98HAH33</strain>
    </source>
</reference>
<evidence type="ECO:0000255" key="1">
    <source>
        <dbReference type="HAMAP-Rule" id="MF_00207"/>
    </source>
</evidence>
<organism>
    <name type="scientific">Streptococcus suis (strain 98HAH33)</name>
    <dbReference type="NCBI Taxonomy" id="391296"/>
    <lineage>
        <taxon>Bacteria</taxon>
        <taxon>Bacillati</taxon>
        <taxon>Bacillota</taxon>
        <taxon>Bacilli</taxon>
        <taxon>Lactobacillales</taxon>
        <taxon>Streptococcaceae</taxon>
        <taxon>Streptococcus</taxon>
    </lineage>
</organism>
<proteinExistence type="inferred from homology"/>
<dbReference type="EC" id="3.6.1.1" evidence="1"/>
<dbReference type="EMBL" id="CP000408">
    <property type="protein sequence ID" value="ABP92834.1"/>
    <property type="molecule type" value="Genomic_DNA"/>
</dbReference>
<dbReference type="SMR" id="A4W395"/>
<dbReference type="KEGG" id="ssv:SSU98_1676"/>
<dbReference type="HOGENOM" id="CLU_025243_0_1_9"/>
<dbReference type="GO" id="GO:0005737">
    <property type="term" value="C:cytoplasm"/>
    <property type="evidence" value="ECO:0007669"/>
    <property type="project" value="UniProtKB-SubCell"/>
</dbReference>
<dbReference type="GO" id="GO:0004427">
    <property type="term" value="F:inorganic diphosphate phosphatase activity"/>
    <property type="evidence" value="ECO:0007669"/>
    <property type="project" value="UniProtKB-UniRule"/>
</dbReference>
<dbReference type="GO" id="GO:0030145">
    <property type="term" value="F:manganese ion binding"/>
    <property type="evidence" value="ECO:0007669"/>
    <property type="project" value="UniProtKB-UniRule"/>
</dbReference>
<dbReference type="FunFam" id="3.10.310.20:FF:000001">
    <property type="entry name" value="Probable manganese-dependent inorganic pyrophosphatase"/>
    <property type="match status" value="1"/>
</dbReference>
<dbReference type="FunFam" id="3.90.1640.10:FF:000001">
    <property type="entry name" value="Probable manganese-dependent inorganic pyrophosphatase"/>
    <property type="match status" value="1"/>
</dbReference>
<dbReference type="Gene3D" id="3.10.310.20">
    <property type="entry name" value="DHHA2 domain"/>
    <property type="match status" value="1"/>
</dbReference>
<dbReference type="Gene3D" id="3.90.1640.10">
    <property type="entry name" value="inorganic pyrophosphatase (n-terminal core)"/>
    <property type="match status" value="1"/>
</dbReference>
<dbReference type="HAMAP" id="MF_00207">
    <property type="entry name" value="PPase_C"/>
    <property type="match status" value="1"/>
</dbReference>
<dbReference type="InterPro" id="IPR001667">
    <property type="entry name" value="DDH_dom"/>
</dbReference>
<dbReference type="InterPro" id="IPR038763">
    <property type="entry name" value="DHH_sf"/>
</dbReference>
<dbReference type="InterPro" id="IPR004097">
    <property type="entry name" value="DHHA2"/>
</dbReference>
<dbReference type="InterPro" id="IPR038222">
    <property type="entry name" value="DHHA2_dom_sf"/>
</dbReference>
<dbReference type="InterPro" id="IPR022934">
    <property type="entry name" value="Mn-dep_inorganic_PyrPase"/>
</dbReference>
<dbReference type="InterPro" id="IPR051319">
    <property type="entry name" value="Oligoribo/pAp-PDE_c-di-AMP_PDE"/>
</dbReference>
<dbReference type="NCBIfam" id="NF003877">
    <property type="entry name" value="PRK05427.1"/>
    <property type="match status" value="1"/>
</dbReference>
<dbReference type="PANTHER" id="PTHR47618">
    <property type="entry name" value="BIFUNCTIONAL OLIGORIBONUCLEASE AND PAP PHOSPHATASE NRNA"/>
    <property type="match status" value="1"/>
</dbReference>
<dbReference type="PANTHER" id="PTHR47618:SF1">
    <property type="entry name" value="BIFUNCTIONAL OLIGORIBONUCLEASE AND PAP PHOSPHATASE NRNA"/>
    <property type="match status" value="1"/>
</dbReference>
<dbReference type="Pfam" id="PF01368">
    <property type="entry name" value="DHH"/>
    <property type="match status" value="1"/>
</dbReference>
<dbReference type="Pfam" id="PF02833">
    <property type="entry name" value="DHHA2"/>
    <property type="match status" value="1"/>
</dbReference>
<dbReference type="SMART" id="SM01131">
    <property type="entry name" value="DHHA2"/>
    <property type="match status" value="1"/>
</dbReference>
<dbReference type="SUPFAM" id="SSF64182">
    <property type="entry name" value="DHH phosphoesterases"/>
    <property type="match status" value="1"/>
</dbReference>
<sequence>MSKFLVFGHRNPDTDAIASSYGWAHLEREVFGRDAEAVVLGTPNEETAFALDYFGVTAPRVVESAKAEGVSQVILTDHNEFQQSIADIKEVEVAAVIDHHRVANFETANPLYMRLEPVGSASSIVYRAFKENGVIPPKEVAGLLLSGLISDTLLLKSPTTHVTDPQVAAELAEIAGVNLEEYGLALLKAGTNLASKSAEELIDIDAKTFGLNGNDVRVAQVNTVDIAEVLERQAEIEAAMTAASVANGYSDFVLMITDIVNSNSEILALGSNMDKVEAAFNFKLENNHAFLAGAVSRKKQVVPQLTDAFNA</sequence>
<name>PPAC_STRS2</name>
<accession>A4W395</accession>
<protein>
    <recommendedName>
        <fullName evidence="1">Probable manganese-dependent inorganic pyrophosphatase</fullName>
        <ecNumber evidence="1">3.6.1.1</ecNumber>
    </recommendedName>
    <alternativeName>
        <fullName evidence="1">Pyrophosphate phospho-hydrolase</fullName>
        <shortName evidence="1">PPase</shortName>
    </alternativeName>
</protein>
<keyword id="KW-0963">Cytoplasm</keyword>
<keyword id="KW-0378">Hydrolase</keyword>
<keyword id="KW-0464">Manganese</keyword>
<keyword id="KW-0479">Metal-binding</keyword>
<feature type="chain" id="PRO_1000012327" description="Probable manganese-dependent inorganic pyrophosphatase">
    <location>
        <begin position="1"/>
        <end position="311"/>
    </location>
</feature>
<feature type="binding site" evidence="1">
    <location>
        <position position="9"/>
    </location>
    <ligand>
        <name>Mn(2+)</name>
        <dbReference type="ChEBI" id="CHEBI:29035"/>
        <label>1</label>
    </ligand>
</feature>
<feature type="binding site" evidence="1">
    <location>
        <position position="13"/>
    </location>
    <ligand>
        <name>Mn(2+)</name>
        <dbReference type="ChEBI" id="CHEBI:29035"/>
        <label>1</label>
    </ligand>
</feature>
<feature type="binding site" evidence="1">
    <location>
        <position position="15"/>
    </location>
    <ligand>
        <name>Mn(2+)</name>
        <dbReference type="ChEBI" id="CHEBI:29035"/>
        <label>2</label>
    </ligand>
</feature>
<feature type="binding site" evidence="1">
    <location>
        <position position="77"/>
    </location>
    <ligand>
        <name>Mn(2+)</name>
        <dbReference type="ChEBI" id="CHEBI:29035"/>
        <label>1</label>
    </ligand>
</feature>
<feature type="binding site" evidence="1">
    <location>
        <position position="77"/>
    </location>
    <ligand>
        <name>Mn(2+)</name>
        <dbReference type="ChEBI" id="CHEBI:29035"/>
        <label>2</label>
    </ligand>
</feature>
<feature type="binding site" evidence="1">
    <location>
        <position position="99"/>
    </location>
    <ligand>
        <name>Mn(2+)</name>
        <dbReference type="ChEBI" id="CHEBI:29035"/>
        <label>2</label>
    </ligand>
</feature>
<feature type="binding site" evidence="1">
    <location>
        <position position="151"/>
    </location>
    <ligand>
        <name>Mn(2+)</name>
        <dbReference type="ChEBI" id="CHEBI:29035"/>
        <label>2</label>
    </ligand>
</feature>
<gene>
    <name evidence="1" type="primary">ppaC</name>
    <name type="ordered locus">SSU98_1676</name>
</gene>
<comment type="catalytic activity">
    <reaction evidence="1">
        <text>diphosphate + H2O = 2 phosphate + H(+)</text>
        <dbReference type="Rhea" id="RHEA:24576"/>
        <dbReference type="ChEBI" id="CHEBI:15377"/>
        <dbReference type="ChEBI" id="CHEBI:15378"/>
        <dbReference type="ChEBI" id="CHEBI:33019"/>
        <dbReference type="ChEBI" id="CHEBI:43474"/>
        <dbReference type="EC" id="3.6.1.1"/>
    </reaction>
</comment>
<comment type="cofactor">
    <cofactor evidence="1">
        <name>Mn(2+)</name>
        <dbReference type="ChEBI" id="CHEBI:29035"/>
    </cofactor>
    <text evidence="1">Binds 2 manganese ions per subunit.</text>
</comment>
<comment type="subcellular location">
    <subcellularLocation>
        <location evidence="1">Cytoplasm</location>
    </subcellularLocation>
</comment>
<comment type="similarity">
    <text evidence="1">Belongs to the PPase class C family.</text>
</comment>